<dbReference type="EC" id="2.4.2.18" evidence="1"/>
<dbReference type="EMBL" id="CP000094">
    <property type="protein sequence ID" value="ABA76851.1"/>
    <property type="molecule type" value="Genomic_DNA"/>
</dbReference>
<dbReference type="RefSeq" id="WP_011336193.1">
    <property type="nucleotide sequence ID" value="NC_007492.2"/>
</dbReference>
<dbReference type="SMR" id="Q3K5V3"/>
<dbReference type="KEGG" id="pfo:Pfl01_5114"/>
<dbReference type="eggNOG" id="COG0547">
    <property type="taxonomic scope" value="Bacteria"/>
</dbReference>
<dbReference type="HOGENOM" id="CLU_034315_2_1_6"/>
<dbReference type="UniPathway" id="UPA00035">
    <property type="reaction ID" value="UER00041"/>
</dbReference>
<dbReference type="Proteomes" id="UP000002704">
    <property type="component" value="Chromosome"/>
</dbReference>
<dbReference type="GO" id="GO:0005829">
    <property type="term" value="C:cytosol"/>
    <property type="evidence" value="ECO:0007669"/>
    <property type="project" value="TreeGrafter"/>
</dbReference>
<dbReference type="GO" id="GO:0004048">
    <property type="term" value="F:anthranilate phosphoribosyltransferase activity"/>
    <property type="evidence" value="ECO:0007669"/>
    <property type="project" value="UniProtKB-UniRule"/>
</dbReference>
<dbReference type="GO" id="GO:0000287">
    <property type="term" value="F:magnesium ion binding"/>
    <property type="evidence" value="ECO:0007669"/>
    <property type="project" value="UniProtKB-UniRule"/>
</dbReference>
<dbReference type="GO" id="GO:0000162">
    <property type="term" value="P:L-tryptophan biosynthetic process"/>
    <property type="evidence" value="ECO:0007669"/>
    <property type="project" value="UniProtKB-UniRule"/>
</dbReference>
<dbReference type="FunFam" id="1.20.970.10:FF:000006">
    <property type="entry name" value="Anthranilate phosphoribosyltransferase"/>
    <property type="match status" value="1"/>
</dbReference>
<dbReference type="FunFam" id="3.40.1030.10:FF:000002">
    <property type="entry name" value="Anthranilate phosphoribosyltransferase"/>
    <property type="match status" value="1"/>
</dbReference>
<dbReference type="Gene3D" id="3.40.1030.10">
    <property type="entry name" value="Nucleoside phosphorylase/phosphoribosyltransferase catalytic domain"/>
    <property type="match status" value="1"/>
</dbReference>
<dbReference type="Gene3D" id="1.20.970.10">
    <property type="entry name" value="Transferase, Pyrimidine Nucleoside Phosphorylase, Chain C"/>
    <property type="match status" value="1"/>
</dbReference>
<dbReference type="HAMAP" id="MF_00211">
    <property type="entry name" value="TrpD"/>
    <property type="match status" value="1"/>
</dbReference>
<dbReference type="InterPro" id="IPR005940">
    <property type="entry name" value="Anthranilate_Pribosyl_Tfrase"/>
</dbReference>
<dbReference type="InterPro" id="IPR000312">
    <property type="entry name" value="Glycosyl_Trfase_fam3"/>
</dbReference>
<dbReference type="InterPro" id="IPR017459">
    <property type="entry name" value="Glycosyl_Trfase_fam3_N_dom"/>
</dbReference>
<dbReference type="InterPro" id="IPR036320">
    <property type="entry name" value="Glycosyl_Trfase_fam3_N_dom_sf"/>
</dbReference>
<dbReference type="InterPro" id="IPR035902">
    <property type="entry name" value="Nuc_phospho_transferase"/>
</dbReference>
<dbReference type="NCBIfam" id="TIGR01245">
    <property type="entry name" value="trpD"/>
    <property type="match status" value="1"/>
</dbReference>
<dbReference type="PANTHER" id="PTHR43285">
    <property type="entry name" value="ANTHRANILATE PHOSPHORIBOSYLTRANSFERASE"/>
    <property type="match status" value="1"/>
</dbReference>
<dbReference type="PANTHER" id="PTHR43285:SF2">
    <property type="entry name" value="ANTHRANILATE PHOSPHORIBOSYLTRANSFERASE"/>
    <property type="match status" value="1"/>
</dbReference>
<dbReference type="Pfam" id="PF02885">
    <property type="entry name" value="Glycos_trans_3N"/>
    <property type="match status" value="1"/>
</dbReference>
<dbReference type="Pfam" id="PF00591">
    <property type="entry name" value="Glycos_transf_3"/>
    <property type="match status" value="1"/>
</dbReference>
<dbReference type="SUPFAM" id="SSF52418">
    <property type="entry name" value="Nucleoside phosphorylase/phosphoribosyltransferase catalytic domain"/>
    <property type="match status" value="1"/>
</dbReference>
<dbReference type="SUPFAM" id="SSF47648">
    <property type="entry name" value="Nucleoside phosphorylase/phosphoribosyltransferase N-terminal domain"/>
    <property type="match status" value="1"/>
</dbReference>
<feature type="chain" id="PRO_0000227184" description="Anthranilate phosphoribosyltransferase">
    <location>
        <begin position="1"/>
        <end position="349"/>
    </location>
</feature>
<feature type="binding site" evidence="1">
    <location>
        <position position="82"/>
    </location>
    <ligand>
        <name>5-phospho-alpha-D-ribose 1-diphosphate</name>
        <dbReference type="ChEBI" id="CHEBI:58017"/>
    </ligand>
</feature>
<feature type="binding site" evidence="1">
    <location>
        <position position="82"/>
    </location>
    <ligand>
        <name>anthranilate</name>
        <dbReference type="ChEBI" id="CHEBI:16567"/>
        <label>1</label>
    </ligand>
</feature>
<feature type="binding site" evidence="1">
    <location>
        <begin position="85"/>
        <end position="86"/>
    </location>
    <ligand>
        <name>5-phospho-alpha-D-ribose 1-diphosphate</name>
        <dbReference type="ChEBI" id="CHEBI:58017"/>
    </ligand>
</feature>
<feature type="binding site" evidence="1">
    <location>
        <begin position="92"/>
        <end position="95"/>
    </location>
    <ligand>
        <name>5-phospho-alpha-D-ribose 1-diphosphate</name>
        <dbReference type="ChEBI" id="CHEBI:58017"/>
    </ligand>
</feature>
<feature type="binding site" evidence="1">
    <location>
        <position position="94"/>
    </location>
    <ligand>
        <name>Mg(2+)</name>
        <dbReference type="ChEBI" id="CHEBI:18420"/>
        <label>1</label>
    </ligand>
</feature>
<feature type="binding site" evidence="1">
    <location>
        <begin position="110"/>
        <end position="118"/>
    </location>
    <ligand>
        <name>5-phospho-alpha-D-ribose 1-diphosphate</name>
        <dbReference type="ChEBI" id="CHEBI:58017"/>
    </ligand>
</feature>
<feature type="binding site" evidence="1">
    <location>
        <position position="113"/>
    </location>
    <ligand>
        <name>anthranilate</name>
        <dbReference type="ChEBI" id="CHEBI:16567"/>
        <label>1</label>
    </ligand>
</feature>
<feature type="binding site" evidence="1">
    <location>
        <position position="122"/>
    </location>
    <ligand>
        <name>5-phospho-alpha-D-ribose 1-diphosphate</name>
        <dbReference type="ChEBI" id="CHEBI:58017"/>
    </ligand>
</feature>
<feature type="binding site" evidence="1">
    <location>
        <position position="168"/>
    </location>
    <ligand>
        <name>anthranilate</name>
        <dbReference type="ChEBI" id="CHEBI:16567"/>
        <label>2</label>
    </ligand>
</feature>
<feature type="binding site" evidence="1">
    <location>
        <position position="227"/>
    </location>
    <ligand>
        <name>Mg(2+)</name>
        <dbReference type="ChEBI" id="CHEBI:18420"/>
        <label>2</label>
    </ligand>
</feature>
<feature type="binding site" evidence="1">
    <location>
        <position position="228"/>
    </location>
    <ligand>
        <name>Mg(2+)</name>
        <dbReference type="ChEBI" id="CHEBI:18420"/>
        <label>1</label>
    </ligand>
</feature>
<feature type="binding site" evidence="1">
    <location>
        <position position="228"/>
    </location>
    <ligand>
        <name>Mg(2+)</name>
        <dbReference type="ChEBI" id="CHEBI:18420"/>
        <label>2</label>
    </ligand>
</feature>
<accession>Q3K5V3</accession>
<gene>
    <name evidence="1" type="primary">trpD</name>
    <name type="ordered locus">Pfl01_5114</name>
</gene>
<keyword id="KW-0028">Amino-acid biosynthesis</keyword>
<keyword id="KW-0057">Aromatic amino acid biosynthesis</keyword>
<keyword id="KW-0328">Glycosyltransferase</keyword>
<keyword id="KW-0460">Magnesium</keyword>
<keyword id="KW-0479">Metal-binding</keyword>
<keyword id="KW-0808">Transferase</keyword>
<keyword id="KW-0822">Tryptophan biosynthesis</keyword>
<sequence length="349" mass="37214">MNIKTALSRIVDHLDLSTDEMRDVMREIMTGQCTDAQIGAFMMAMRMKSESIDEIVGAVSVMRELADKVELKTLDRVVDVVGTGGDGANIFNVSTASSFVVAAAGCTVAKHGNRAVSGKSGSADLLEAAGIYLNLTPVQVARCIDNVGIGFMFAQTHHKAMKYAAGPRRDLGLRTLFNMLGPLTNPAGVKHQVVGVFTPALCRPLAEVLQRLGSKHVLVVHSKDGLDEFSLAAPTFVAELKDDQITEYWVEPEDLGMKSQSLHGLSVEGPEASLALIRDALGKRKTENGQKAAEMIVLNAGAALYAADLATSLKEGVALAHDALHTGLAREKLEELGAFTAVFKVENEG</sequence>
<name>TRPD_PSEPF</name>
<comment type="function">
    <text evidence="1">Catalyzes the transfer of the phosphoribosyl group of 5-phosphorylribose-1-pyrophosphate (PRPP) to anthranilate to yield N-(5'-phosphoribosyl)-anthranilate (PRA).</text>
</comment>
<comment type="catalytic activity">
    <reaction evidence="1">
        <text>N-(5-phospho-beta-D-ribosyl)anthranilate + diphosphate = 5-phospho-alpha-D-ribose 1-diphosphate + anthranilate</text>
        <dbReference type="Rhea" id="RHEA:11768"/>
        <dbReference type="ChEBI" id="CHEBI:16567"/>
        <dbReference type="ChEBI" id="CHEBI:18277"/>
        <dbReference type="ChEBI" id="CHEBI:33019"/>
        <dbReference type="ChEBI" id="CHEBI:58017"/>
        <dbReference type="EC" id="2.4.2.18"/>
    </reaction>
</comment>
<comment type="cofactor">
    <cofactor evidence="1">
        <name>Mg(2+)</name>
        <dbReference type="ChEBI" id="CHEBI:18420"/>
    </cofactor>
    <text evidence="1">Binds 2 magnesium ions per monomer.</text>
</comment>
<comment type="pathway">
    <text evidence="1">Amino-acid biosynthesis; L-tryptophan biosynthesis; L-tryptophan from chorismate: step 2/5.</text>
</comment>
<comment type="subunit">
    <text evidence="1">Homodimer.</text>
</comment>
<comment type="similarity">
    <text evidence="1">Belongs to the anthranilate phosphoribosyltransferase family.</text>
</comment>
<organism>
    <name type="scientific">Pseudomonas fluorescens (strain Pf0-1)</name>
    <dbReference type="NCBI Taxonomy" id="205922"/>
    <lineage>
        <taxon>Bacteria</taxon>
        <taxon>Pseudomonadati</taxon>
        <taxon>Pseudomonadota</taxon>
        <taxon>Gammaproteobacteria</taxon>
        <taxon>Pseudomonadales</taxon>
        <taxon>Pseudomonadaceae</taxon>
        <taxon>Pseudomonas</taxon>
    </lineage>
</organism>
<reference key="1">
    <citation type="journal article" date="2009" name="Genome Biol.">
        <title>Genomic and genetic analyses of diversity and plant interactions of Pseudomonas fluorescens.</title>
        <authorList>
            <person name="Silby M.W."/>
            <person name="Cerdeno-Tarraga A.M."/>
            <person name="Vernikos G.S."/>
            <person name="Giddens S.R."/>
            <person name="Jackson R.W."/>
            <person name="Preston G.M."/>
            <person name="Zhang X.-X."/>
            <person name="Moon C.D."/>
            <person name="Gehrig S.M."/>
            <person name="Godfrey S.A.C."/>
            <person name="Knight C.G."/>
            <person name="Malone J.G."/>
            <person name="Robinson Z."/>
            <person name="Spiers A.J."/>
            <person name="Harris S."/>
            <person name="Challis G.L."/>
            <person name="Yaxley A.M."/>
            <person name="Harris D."/>
            <person name="Seeger K."/>
            <person name="Murphy L."/>
            <person name="Rutter S."/>
            <person name="Squares R."/>
            <person name="Quail M.A."/>
            <person name="Saunders E."/>
            <person name="Mavromatis K."/>
            <person name="Brettin T.S."/>
            <person name="Bentley S.D."/>
            <person name="Hothersall J."/>
            <person name="Stephens E."/>
            <person name="Thomas C.M."/>
            <person name="Parkhill J."/>
            <person name="Levy S.B."/>
            <person name="Rainey P.B."/>
            <person name="Thomson N.R."/>
        </authorList>
    </citation>
    <scope>NUCLEOTIDE SEQUENCE [LARGE SCALE GENOMIC DNA]</scope>
    <source>
        <strain>Pf0-1</strain>
    </source>
</reference>
<evidence type="ECO:0000255" key="1">
    <source>
        <dbReference type="HAMAP-Rule" id="MF_00211"/>
    </source>
</evidence>
<proteinExistence type="inferred from homology"/>
<protein>
    <recommendedName>
        <fullName evidence="1">Anthranilate phosphoribosyltransferase</fullName>
        <ecNumber evidence="1">2.4.2.18</ecNumber>
    </recommendedName>
</protein>